<dbReference type="EC" id="3.1.21.10" evidence="1"/>
<dbReference type="EMBL" id="AE016825">
    <property type="protein sequence ID" value="AAQ61885.1"/>
    <property type="molecule type" value="Genomic_DNA"/>
</dbReference>
<dbReference type="RefSeq" id="WP_011137771.1">
    <property type="nucleotide sequence ID" value="NC_005085.1"/>
</dbReference>
<dbReference type="SMR" id="Q7NQB5"/>
<dbReference type="STRING" id="243365.CV_4225"/>
<dbReference type="GeneID" id="66366297"/>
<dbReference type="KEGG" id="cvi:CV_4225"/>
<dbReference type="eggNOG" id="COG0817">
    <property type="taxonomic scope" value="Bacteria"/>
</dbReference>
<dbReference type="HOGENOM" id="CLU_091257_2_0_4"/>
<dbReference type="OrthoDB" id="9805499at2"/>
<dbReference type="Proteomes" id="UP000001424">
    <property type="component" value="Chromosome"/>
</dbReference>
<dbReference type="GO" id="GO:0005737">
    <property type="term" value="C:cytoplasm"/>
    <property type="evidence" value="ECO:0007669"/>
    <property type="project" value="UniProtKB-SubCell"/>
</dbReference>
<dbReference type="GO" id="GO:0048476">
    <property type="term" value="C:Holliday junction resolvase complex"/>
    <property type="evidence" value="ECO:0007669"/>
    <property type="project" value="UniProtKB-UniRule"/>
</dbReference>
<dbReference type="GO" id="GO:0008821">
    <property type="term" value="F:crossover junction DNA endonuclease activity"/>
    <property type="evidence" value="ECO:0007669"/>
    <property type="project" value="UniProtKB-UniRule"/>
</dbReference>
<dbReference type="GO" id="GO:0003677">
    <property type="term" value="F:DNA binding"/>
    <property type="evidence" value="ECO:0007669"/>
    <property type="project" value="UniProtKB-KW"/>
</dbReference>
<dbReference type="GO" id="GO:0000287">
    <property type="term" value="F:magnesium ion binding"/>
    <property type="evidence" value="ECO:0007669"/>
    <property type="project" value="UniProtKB-UniRule"/>
</dbReference>
<dbReference type="GO" id="GO:0006310">
    <property type="term" value="P:DNA recombination"/>
    <property type="evidence" value="ECO:0007669"/>
    <property type="project" value="UniProtKB-UniRule"/>
</dbReference>
<dbReference type="GO" id="GO:0006281">
    <property type="term" value="P:DNA repair"/>
    <property type="evidence" value="ECO:0007669"/>
    <property type="project" value="UniProtKB-UniRule"/>
</dbReference>
<dbReference type="CDD" id="cd16962">
    <property type="entry name" value="RuvC"/>
    <property type="match status" value="1"/>
</dbReference>
<dbReference type="FunFam" id="3.30.420.10:FF:000002">
    <property type="entry name" value="Crossover junction endodeoxyribonuclease RuvC"/>
    <property type="match status" value="1"/>
</dbReference>
<dbReference type="Gene3D" id="3.30.420.10">
    <property type="entry name" value="Ribonuclease H-like superfamily/Ribonuclease H"/>
    <property type="match status" value="1"/>
</dbReference>
<dbReference type="HAMAP" id="MF_00034">
    <property type="entry name" value="RuvC"/>
    <property type="match status" value="1"/>
</dbReference>
<dbReference type="InterPro" id="IPR012337">
    <property type="entry name" value="RNaseH-like_sf"/>
</dbReference>
<dbReference type="InterPro" id="IPR036397">
    <property type="entry name" value="RNaseH_sf"/>
</dbReference>
<dbReference type="InterPro" id="IPR020563">
    <property type="entry name" value="X-over_junc_endoDNase_Mg_BS"/>
</dbReference>
<dbReference type="InterPro" id="IPR002176">
    <property type="entry name" value="X-over_junc_endoDNase_RuvC"/>
</dbReference>
<dbReference type="NCBIfam" id="TIGR00228">
    <property type="entry name" value="ruvC"/>
    <property type="match status" value="1"/>
</dbReference>
<dbReference type="PANTHER" id="PTHR30194">
    <property type="entry name" value="CROSSOVER JUNCTION ENDODEOXYRIBONUCLEASE RUVC"/>
    <property type="match status" value="1"/>
</dbReference>
<dbReference type="PANTHER" id="PTHR30194:SF3">
    <property type="entry name" value="CROSSOVER JUNCTION ENDODEOXYRIBONUCLEASE RUVC"/>
    <property type="match status" value="1"/>
</dbReference>
<dbReference type="Pfam" id="PF02075">
    <property type="entry name" value="RuvC"/>
    <property type="match status" value="1"/>
</dbReference>
<dbReference type="PRINTS" id="PR00696">
    <property type="entry name" value="RSOLVASERUVC"/>
</dbReference>
<dbReference type="SUPFAM" id="SSF53098">
    <property type="entry name" value="Ribonuclease H-like"/>
    <property type="match status" value="1"/>
</dbReference>
<dbReference type="PROSITE" id="PS01321">
    <property type="entry name" value="RUVC"/>
    <property type="match status" value="1"/>
</dbReference>
<name>RUVC_CHRVO</name>
<protein>
    <recommendedName>
        <fullName evidence="1">Crossover junction endodeoxyribonuclease RuvC</fullName>
        <ecNumber evidence="1">3.1.21.10</ecNumber>
    </recommendedName>
    <alternativeName>
        <fullName evidence="1">Holliday junction nuclease RuvC</fullName>
    </alternativeName>
    <alternativeName>
        <fullName evidence="1">Holliday junction resolvase RuvC</fullName>
    </alternativeName>
</protein>
<sequence>MSRRILGIDPGSLITGFGVIDVVGNQRHYVASGAIRTKSGSPLAERVKVLVDGIHQVIDTYRPTEAALERVFVNVNPAATLMLGQARGACMTALVLKDLPVAEYTALQVKQSVVGQGKAPKEQVQYMVVRMLNLSGTPQADAADALAVALTHANHSGGAIGKLALRGLKVRGGRLV</sequence>
<comment type="function">
    <text evidence="1">The RuvA-RuvB-RuvC complex processes Holliday junction (HJ) DNA during genetic recombination and DNA repair. Endonuclease that resolves HJ intermediates. Cleaves cruciform DNA by making single-stranded nicks across the HJ at symmetrical positions within the homologous arms, yielding a 5'-phosphate and a 3'-hydroxyl group; requires a central core of homology in the junction. The consensus cleavage sequence is 5'-(A/T)TT(C/G)-3'. Cleavage occurs on the 3'-side of the TT dinucleotide at the point of strand exchange. HJ branch migration catalyzed by RuvA-RuvB allows RuvC to scan DNA until it finds its consensus sequence, where it cleaves and resolves the cruciform DNA.</text>
</comment>
<comment type="catalytic activity">
    <reaction evidence="1">
        <text>Endonucleolytic cleavage at a junction such as a reciprocal single-stranded crossover between two homologous DNA duplexes (Holliday junction).</text>
        <dbReference type="EC" id="3.1.21.10"/>
    </reaction>
</comment>
<comment type="cofactor">
    <cofactor evidence="1">
        <name>Mg(2+)</name>
        <dbReference type="ChEBI" id="CHEBI:18420"/>
    </cofactor>
    <text evidence="1">Binds 2 Mg(2+) ion per subunit.</text>
</comment>
<comment type="subunit">
    <text evidence="1">Homodimer which binds Holliday junction (HJ) DNA. The HJ becomes 2-fold symmetrical on binding to RuvC with unstacked arms; it has a different conformation from HJ DNA in complex with RuvA. In the full resolvosome a probable DNA-RuvA(4)-RuvB(12)-RuvC(2) complex forms which resolves the HJ.</text>
</comment>
<comment type="subcellular location">
    <subcellularLocation>
        <location evidence="1">Cytoplasm</location>
    </subcellularLocation>
</comment>
<comment type="similarity">
    <text evidence="1">Belongs to the RuvC family.</text>
</comment>
<keyword id="KW-0963">Cytoplasm</keyword>
<keyword id="KW-0227">DNA damage</keyword>
<keyword id="KW-0233">DNA recombination</keyword>
<keyword id="KW-0234">DNA repair</keyword>
<keyword id="KW-0238">DNA-binding</keyword>
<keyword id="KW-0255">Endonuclease</keyword>
<keyword id="KW-0378">Hydrolase</keyword>
<keyword id="KW-0460">Magnesium</keyword>
<keyword id="KW-0479">Metal-binding</keyword>
<keyword id="KW-0540">Nuclease</keyword>
<keyword id="KW-1185">Reference proteome</keyword>
<evidence type="ECO:0000255" key="1">
    <source>
        <dbReference type="HAMAP-Rule" id="MF_00034"/>
    </source>
</evidence>
<proteinExistence type="inferred from homology"/>
<feature type="chain" id="PRO_0000183091" description="Crossover junction endodeoxyribonuclease RuvC">
    <location>
        <begin position="1"/>
        <end position="176"/>
    </location>
</feature>
<feature type="active site" evidence="1">
    <location>
        <position position="9"/>
    </location>
</feature>
<feature type="active site" evidence="1">
    <location>
        <position position="69"/>
    </location>
</feature>
<feature type="active site" evidence="1">
    <location>
        <position position="141"/>
    </location>
</feature>
<feature type="binding site" evidence="1">
    <location>
        <position position="9"/>
    </location>
    <ligand>
        <name>Mg(2+)</name>
        <dbReference type="ChEBI" id="CHEBI:18420"/>
        <label>1</label>
    </ligand>
</feature>
<feature type="binding site" evidence="1">
    <location>
        <position position="69"/>
    </location>
    <ligand>
        <name>Mg(2+)</name>
        <dbReference type="ChEBI" id="CHEBI:18420"/>
        <label>2</label>
    </ligand>
</feature>
<feature type="binding site" evidence="1">
    <location>
        <position position="141"/>
    </location>
    <ligand>
        <name>Mg(2+)</name>
        <dbReference type="ChEBI" id="CHEBI:18420"/>
        <label>1</label>
    </ligand>
</feature>
<organism>
    <name type="scientific">Chromobacterium violaceum (strain ATCC 12472 / DSM 30191 / JCM 1249 / CCUG 213 / NBRC 12614 / NCIMB 9131 / NCTC 9757 / MK)</name>
    <dbReference type="NCBI Taxonomy" id="243365"/>
    <lineage>
        <taxon>Bacteria</taxon>
        <taxon>Pseudomonadati</taxon>
        <taxon>Pseudomonadota</taxon>
        <taxon>Betaproteobacteria</taxon>
        <taxon>Neisseriales</taxon>
        <taxon>Chromobacteriaceae</taxon>
        <taxon>Chromobacterium</taxon>
    </lineage>
</organism>
<accession>Q7NQB5</accession>
<gene>
    <name evidence="1" type="primary">ruvC</name>
    <name type="ordered locus">CV_4225</name>
</gene>
<reference key="1">
    <citation type="journal article" date="2003" name="Proc. Natl. Acad. Sci. U.S.A.">
        <title>The complete genome sequence of Chromobacterium violaceum reveals remarkable and exploitable bacterial adaptability.</title>
        <authorList>
            <person name="Vasconcelos A.T.R."/>
            <person name="de Almeida D.F."/>
            <person name="Hungria M."/>
            <person name="Guimaraes C.T."/>
            <person name="Antonio R.V."/>
            <person name="Almeida F.C."/>
            <person name="de Almeida L.G.P."/>
            <person name="de Almeida R."/>
            <person name="Alves-Gomes J.A."/>
            <person name="Andrade E.M."/>
            <person name="Araripe J."/>
            <person name="de Araujo M.F.F."/>
            <person name="Astolfi-Filho S."/>
            <person name="Azevedo V."/>
            <person name="Baptista A.J."/>
            <person name="Bataus L.A.M."/>
            <person name="Batista J.S."/>
            <person name="Belo A."/>
            <person name="van den Berg C."/>
            <person name="Bogo M."/>
            <person name="Bonatto S."/>
            <person name="Bordignon J."/>
            <person name="Brigido M.M."/>
            <person name="Brito C.A."/>
            <person name="Brocchi M."/>
            <person name="Burity H.A."/>
            <person name="Camargo A.A."/>
            <person name="Cardoso D.D.P."/>
            <person name="Carneiro N.P."/>
            <person name="Carraro D.M."/>
            <person name="Carvalho C.M.B."/>
            <person name="Cascardo J.C.M."/>
            <person name="Cavada B.S."/>
            <person name="Chueire L.M.O."/>
            <person name="Creczynski-Pasa T.B."/>
            <person name="Cunha-Junior N.C."/>
            <person name="Fagundes N."/>
            <person name="Falcao C.L."/>
            <person name="Fantinatti F."/>
            <person name="Farias I.P."/>
            <person name="Felipe M.S.S."/>
            <person name="Ferrari L.P."/>
            <person name="Ferro J.A."/>
            <person name="Ferro M.I.T."/>
            <person name="Franco G.R."/>
            <person name="Freitas N.S.A."/>
            <person name="Furlan L.R."/>
            <person name="Gazzinelli R.T."/>
            <person name="Gomes E.A."/>
            <person name="Goncalves P.R."/>
            <person name="Grangeiro T.B."/>
            <person name="Grattapaglia D."/>
            <person name="Grisard E.C."/>
            <person name="Hanna E.S."/>
            <person name="Jardim S.N."/>
            <person name="Laurino J."/>
            <person name="Leoi L.C.T."/>
            <person name="Lima L.F.A."/>
            <person name="Loureiro M.F."/>
            <person name="Lyra M.C.C.P."/>
            <person name="Madeira H.M.F."/>
            <person name="Manfio G.P."/>
            <person name="Maranhao A.Q."/>
            <person name="Martins W.S."/>
            <person name="di Mauro S.M.Z."/>
            <person name="de Medeiros S.R.B."/>
            <person name="Meissner R.V."/>
            <person name="Moreira M.A.M."/>
            <person name="Nascimento F.F."/>
            <person name="Nicolas M.F."/>
            <person name="Oliveira J.G."/>
            <person name="Oliveira S.C."/>
            <person name="Paixao R.F.C."/>
            <person name="Parente J.A."/>
            <person name="Pedrosa F.O."/>
            <person name="Pena S.D.J."/>
            <person name="Pereira J.O."/>
            <person name="Pereira M."/>
            <person name="Pinto L.S.R.C."/>
            <person name="Pinto L.S."/>
            <person name="Porto J.I.R."/>
            <person name="Potrich D.P."/>
            <person name="Ramalho-Neto C.E."/>
            <person name="Reis A.M.M."/>
            <person name="Rigo L.U."/>
            <person name="Rondinelli E."/>
            <person name="Santos E.B.P."/>
            <person name="Santos F.R."/>
            <person name="Schneider M.P.C."/>
            <person name="Seuanez H.N."/>
            <person name="Silva A.M.R."/>
            <person name="da Silva A.L.C."/>
            <person name="Silva D.W."/>
            <person name="Silva R."/>
            <person name="Simoes I.C."/>
            <person name="Simon D."/>
            <person name="Soares C.M.A."/>
            <person name="Soares R.B.A."/>
            <person name="Souza E.M."/>
            <person name="Souza K.R.L."/>
            <person name="Souza R.C."/>
            <person name="Steffens M.B.R."/>
            <person name="Steindel M."/>
            <person name="Teixeira S.R."/>
            <person name="Urmenyi T."/>
            <person name="Vettore A."/>
            <person name="Wassem R."/>
            <person name="Zaha A."/>
            <person name="Simpson A.J.G."/>
        </authorList>
    </citation>
    <scope>NUCLEOTIDE SEQUENCE [LARGE SCALE GENOMIC DNA]</scope>
    <source>
        <strain>ATCC 12472 / DSM 30191 / JCM 1249 / CCUG 213 / NBRC 12614 / NCIMB 9131 / NCTC 9757 / MK</strain>
    </source>
</reference>